<organism>
    <name type="scientific">Synechocystis sp. (strain ATCC 27184 / PCC 6803 / Kazusa)</name>
    <dbReference type="NCBI Taxonomy" id="1111708"/>
    <lineage>
        <taxon>Bacteria</taxon>
        <taxon>Bacillati</taxon>
        <taxon>Cyanobacteriota</taxon>
        <taxon>Cyanophyceae</taxon>
        <taxon>Synechococcales</taxon>
        <taxon>Merismopediaceae</taxon>
        <taxon>Synechocystis</taxon>
    </lineage>
</organism>
<feature type="chain" id="PRO_0000146783" description="Acetyl-coenzyme A carboxylase carboxyl transferase subunit alpha">
    <location>
        <begin position="1"/>
        <end position="326"/>
    </location>
</feature>
<feature type="domain" description="CoA carboxyltransferase C-terminal" evidence="2">
    <location>
        <begin position="44"/>
        <end position="298"/>
    </location>
</feature>
<proteinExistence type="inferred from homology"/>
<accession>P74638</accession>
<gene>
    <name evidence="1" type="primary">accA</name>
    <name type="ordered locus">sll0728</name>
</gene>
<evidence type="ECO:0000255" key="1">
    <source>
        <dbReference type="HAMAP-Rule" id="MF_00823"/>
    </source>
</evidence>
<evidence type="ECO:0000255" key="2">
    <source>
        <dbReference type="PROSITE-ProRule" id="PRU01137"/>
    </source>
</evidence>
<comment type="function">
    <text evidence="1">Component of the acetyl coenzyme A carboxylase (ACC) complex. First, biotin carboxylase catalyzes the carboxylation of biotin on its carrier protein (BCCP) and then the CO(2) group is transferred by the carboxyltransferase to acetyl-CoA to form malonyl-CoA.</text>
</comment>
<comment type="catalytic activity">
    <reaction evidence="1">
        <text>N(6)-carboxybiotinyl-L-lysyl-[protein] + acetyl-CoA = N(6)-biotinyl-L-lysyl-[protein] + malonyl-CoA</text>
        <dbReference type="Rhea" id="RHEA:54728"/>
        <dbReference type="Rhea" id="RHEA-COMP:10505"/>
        <dbReference type="Rhea" id="RHEA-COMP:10506"/>
        <dbReference type="ChEBI" id="CHEBI:57288"/>
        <dbReference type="ChEBI" id="CHEBI:57384"/>
        <dbReference type="ChEBI" id="CHEBI:83144"/>
        <dbReference type="ChEBI" id="CHEBI:83145"/>
        <dbReference type="EC" id="2.1.3.15"/>
    </reaction>
</comment>
<comment type="pathway">
    <text evidence="1">Lipid metabolism; malonyl-CoA biosynthesis; malonyl-CoA from acetyl-CoA: step 1/1.</text>
</comment>
<comment type="subunit">
    <text evidence="1">Acetyl-CoA carboxylase is a heterohexamer composed of biotin carboxyl carrier protein (AccB), biotin carboxylase (AccC) and two subunits each of ACCase subunit alpha (AccA) and ACCase subunit beta (AccD).</text>
</comment>
<comment type="subcellular location">
    <subcellularLocation>
        <location evidence="1">Cytoplasm</location>
    </subcellularLocation>
</comment>
<comment type="similarity">
    <text evidence="1">Belongs to the AccA family.</text>
</comment>
<keyword id="KW-0067">ATP-binding</keyword>
<keyword id="KW-0963">Cytoplasm</keyword>
<keyword id="KW-0275">Fatty acid biosynthesis</keyword>
<keyword id="KW-0276">Fatty acid metabolism</keyword>
<keyword id="KW-0444">Lipid biosynthesis</keyword>
<keyword id="KW-0443">Lipid metabolism</keyword>
<keyword id="KW-0547">Nucleotide-binding</keyword>
<keyword id="KW-1185">Reference proteome</keyword>
<keyword id="KW-0808">Transferase</keyword>
<sequence length="326" mass="36042">MSKSERRVFLLDFEKPLYELEEKINQIRELAEEKNVDVSEQLSQLESRAEQLRQEIFSNLNPSQRLQLARHPRRPSTLDYIQAIADDWFEMHGDRGGYDDPALVGGVARLGTRPVVIMGHQKGRDTKDNVARNFGMAAPNGYRKALRLMEHADRFGMPIITFIDTPGAWAGIDAEKLGQGEAIAVNLREMFRLDVPILCTVIGEGGSGGALGIGVGDRVLMLENAVYTVATPEACAAILWKDAKKSDKAAIALKITADDLAKLQIIDGIIPEPKGAAHANPLGAAAKLKEALLFHLNTLAQLTPQERKQLRYDKFRHLGQFLETAV</sequence>
<name>ACCA_SYNY3</name>
<reference key="1">
    <citation type="journal article" date="1996" name="DNA Res.">
        <title>Sequence analysis of the genome of the unicellular cyanobacterium Synechocystis sp. strain PCC6803. II. Sequence determination of the entire genome and assignment of potential protein-coding regions.</title>
        <authorList>
            <person name="Kaneko T."/>
            <person name="Sato S."/>
            <person name="Kotani H."/>
            <person name="Tanaka A."/>
            <person name="Asamizu E."/>
            <person name="Nakamura Y."/>
            <person name="Miyajima N."/>
            <person name="Hirosawa M."/>
            <person name="Sugiura M."/>
            <person name="Sasamoto S."/>
            <person name="Kimura T."/>
            <person name="Hosouchi T."/>
            <person name="Matsuno A."/>
            <person name="Muraki A."/>
            <person name="Nakazaki N."/>
            <person name="Naruo K."/>
            <person name="Okumura S."/>
            <person name="Shimpo S."/>
            <person name="Takeuchi C."/>
            <person name="Wada T."/>
            <person name="Watanabe A."/>
            <person name="Yamada M."/>
            <person name="Yasuda M."/>
            <person name="Tabata S."/>
        </authorList>
    </citation>
    <scope>NUCLEOTIDE SEQUENCE [LARGE SCALE GENOMIC DNA]</scope>
    <source>
        <strain>ATCC 27184 / PCC 6803 / Kazusa</strain>
    </source>
</reference>
<dbReference type="EC" id="2.1.3.15" evidence="1"/>
<dbReference type="EMBL" id="BA000022">
    <property type="protein sequence ID" value="BAA18754.1"/>
    <property type="molecule type" value="Genomic_DNA"/>
</dbReference>
<dbReference type="PIR" id="S76842">
    <property type="entry name" value="S76842"/>
</dbReference>
<dbReference type="SMR" id="P74638"/>
<dbReference type="FunCoup" id="P74638">
    <property type="interactions" value="246"/>
</dbReference>
<dbReference type="IntAct" id="P74638">
    <property type="interactions" value="3"/>
</dbReference>
<dbReference type="STRING" id="1148.gene:10500526"/>
<dbReference type="PaxDb" id="1148-1653844"/>
<dbReference type="EnsemblBacteria" id="BAA18754">
    <property type="protein sequence ID" value="BAA18754"/>
    <property type="gene ID" value="BAA18754"/>
</dbReference>
<dbReference type="KEGG" id="syn:sll0728"/>
<dbReference type="eggNOG" id="COG0825">
    <property type="taxonomic scope" value="Bacteria"/>
</dbReference>
<dbReference type="InParanoid" id="P74638"/>
<dbReference type="PhylomeDB" id="P74638"/>
<dbReference type="UniPathway" id="UPA00655">
    <property type="reaction ID" value="UER00711"/>
</dbReference>
<dbReference type="Proteomes" id="UP000001425">
    <property type="component" value="Chromosome"/>
</dbReference>
<dbReference type="GO" id="GO:0009317">
    <property type="term" value="C:acetyl-CoA carboxylase complex"/>
    <property type="evidence" value="ECO:0007669"/>
    <property type="project" value="InterPro"/>
</dbReference>
<dbReference type="GO" id="GO:0003989">
    <property type="term" value="F:acetyl-CoA carboxylase activity"/>
    <property type="evidence" value="ECO:0007669"/>
    <property type="project" value="InterPro"/>
</dbReference>
<dbReference type="GO" id="GO:0005524">
    <property type="term" value="F:ATP binding"/>
    <property type="evidence" value="ECO:0007669"/>
    <property type="project" value="UniProtKB-KW"/>
</dbReference>
<dbReference type="GO" id="GO:0016743">
    <property type="term" value="F:carboxyl- or carbamoyltransferase activity"/>
    <property type="evidence" value="ECO:0007669"/>
    <property type="project" value="UniProtKB-UniRule"/>
</dbReference>
<dbReference type="GO" id="GO:0006633">
    <property type="term" value="P:fatty acid biosynthetic process"/>
    <property type="evidence" value="ECO:0007669"/>
    <property type="project" value="UniProtKB-KW"/>
</dbReference>
<dbReference type="GO" id="GO:2001295">
    <property type="term" value="P:malonyl-CoA biosynthetic process"/>
    <property type="evidence" value="ECO:0007669"/>
    <property type="project" value="UniProtKB-UniRule"/>
</dbReference>
<dbReference type="Gene3D" id="3.90.226.10">
    <property type="entry name" value="2-enoyl-CoA Hydratase, Chain A, domain 1"/>
    <property type="match status" value="1"/>
</dbReference>
<dbReference type="HAMAP" id="MF_00823">
    <property type="entry name" value="AcetylCoA_CT_alpha"/>
    <property type="match status" value="1"/>
</dbReference>
<dbReference type="InterPro" id="IPR001095">
    <property type="entry name" value="Acetyl_CoA_COase_a_su"/>
</dbReference>
<dbReference type="InterPro" id="IPR029045">
    <property type="entry name" value="ClpP/crotonase-like_dom_sf"/>
</dbReference>
<dbReference type="InterPro" id="IPR011763">
    <property type="entry name" value="COA_CT_C"/>
</dbReference>
<dbReference type="NCBIfam" id="TIGR00513">
    <property type="entry name" value="accA"/>
    <property type="match status" value="1"/>
</dbReference>
<dbReference type="NCBIfam" id="NF041504">
    <property type="entry name" value="AccA_sub"/>
    <property type="match status" value="1"/>
</dbReference>
<dbReference type="NCBIfam" id="NF004344">
    <property type="entry name" value="PRK05724.1"/>
    <property type="match status" value="1"/>
</dbReference>
<dbReference type="PANTHER" id="PTHR42853">
    <property type="entry name" value="ACETYL-COENZYME A CARBOXYLASE CARBOXYL TRANSFERASE SUBUNIT ALPHA"/>
    <property type="match status" value="1"/>
</dbReference>
<dbReference type="PANTHER" id="PTHR42853:SF3">
    <property type="entry name" value="ACETYL-COENZYME A CARBOXYLASE CARBOXYL TRANSFERASE SUBUNIT ALPHA, CHLOROPLASTIC"/>
    <property type="match status" value="1"/>
</dbReference>
<dbReference type="Pfam" id="PF03255">
    <property type="entry name" value="ACCA"/>
    <property type="match status" value="1"/>
</dbReference>
<dbReference type="PRINTS" id="PR01069">
    <property type="entry name" value="ACCCTRFRASEA"/>
</dbReference>
<dbReference type="SUPFAM" id="SSF52096">
    <property type="entry name" value="ClpP/crotonase"/>
    <property type="match status" value="1"/>
</dbReference>
<dbReference type="PROSITE" id="PS50989">
    <property type="entry name" value="COA_CT_CTER"/>
    <property type="match status" value="1"/>
</dbReference>
<protein>
    <recommendedName>
        <fullName evidence="1">Acetyl-coenzyme A carboxylase carboxyl transferase subunit alpha</fullName>
        <shortName evidence="1">ACCase subunit alpha</shortName>
        <shortName evidence="1">Acetyl-CoA carboxylase carboxyltransferase subunit alpha</shortName>
        <ecNumber evidence="1">2.1.3.15</ecNumber>
    </recommendedName>
</protein>